<dbReference type="EMBL" id="X03016">
    <property type="protein sequence ID" value="CAA26802.1"/>
    <property type="status" value="ALT_INIT"/>
    <property type="molecule type" value="Genomic_DNA"/>
</dbReference>
<dbReference type="EMBL" id="AF158101">
    <property type="protein sequence ID" value="AAD42501.1"/>
    <property type="molecule type" value="Genomic_DNA"/>
</dbReference>
<dbReference type="PIR" id="A04311">
    <property type="entry name" value="ZBBPT4"/>
</dbReference>
<dbReference type="RefSeq" id="NP_049750.1">
    <property type="nucleotide sequence ID" value="NC_000866.4"/>
</dbReference>
<dbReference type="SMR" id="P04533"/>
<dbReference type="GeneID" id="1258596"/>
<dbReference type="KEGG" id="vg:1258596"/>
<dbReference type="OrthoDB" id="11210at10239"/>
<dbReference type="Proteomes" id="UP000009087">
    <property type="component" value="Segment"/>
</dbReference>
<dbReference type="GO" id="GO:0016787">
    <property type="term" value="F:hydrolase activity"/>
    <property type="evidence" value="ECO:0007669"/>
    <property type="project" value="UniProtKB-KW"/>
</dbReference>
<dbReference type="InterPro" id="IPR056175">
    <property type="entry name" value="Acb1-like_C"/>
</dbReference>
<dbReference type="InterPro" id="IPR009097">
    <property type="entry name" value="Cyclic_Pdiesterase"/>
</dbReference>
<dbReference type="Pfam" id="PF23474">
    <property type="entry name" value="Acb1"/>
    <property type="match status" value="1"/>
</dbReference>
<dbReference type="SUPFAM" id="SSF55144">
    <property type="entry name" value="LigT-like"/>
    <property type="match status" value="1"/>
</dbReference>
<organismHost>
    <name type="scientific">Escherichia coli</name>
    <dbReference type="NCBI Taxonomy" id="562"/>
</organismHost>
<protein>
    <recommendedName>
        <fullName evidence="3">Anti-CBASS protein Acb1</fullName>
        <shortName evidence="3">Acb1</shortName>
    </recommendedName>
    <alternativeName>
        <fullName>Gene product 57B</fullName>
        <shortName>gp57B</shortName>
    </alternativeName>
</protein>
<gene>
    <name type="primary">57B</name>
</gene>
<accession>P04533</accession>
<name>ACB1_BPT4</name>
<proteinExistence type="evidence at protein level"/>
<feature type="chain" id="PRO_0000164993" description="Anti-CBASS protein Acb1">
    <location>
        <begin position="1"/>
        <end position="152"/>
    </location>
</feature>
<feature type="active site" evidence="1">
    <location>
        <position position="44"/>
    </location>
</feature>
<feature type="active site" evidence="1">
    <location>
        <position position="46"/>
    </location>
</feature>
<feature type="active site" evidence="1">
    <location>
        <position position="113"/>
    </location>
</feature>
<feature type="active site" evidence="1">
    <location>
        <position position="115"/>
    </location>
</feature>
<feature type="binding site" evidence="1">
    <location>
        <position position="12"/>
    </location>
    <ligand>
        <name>3',3'-cGAMP</name>
        <dbReference type="ChEBI" id="CHEBI:71501"/>
    </ligand>
</feature>
<feature type="binding site" evidence="1">
    <location>
        <position position="12"/>
    </location>
    <ligand>
        <name>3',3'-cUAMP</name>
        <dbReference type="ChEBI" id="CHEBI:143809"/>
    </ligand>
</feature>
<feature type="binding site" description="specific to adenosine" evidence="1">
    <location>
        <position position="141"/>
    </location>
    <ligand>
        <name>3',3'-cGAMP</name>
        <dbReference type="ChEBI" id="CHEBI:71501"/>
    </ligand>
</feature>
<feature type="binding site" description="specific to adenosine" evidence="1">
    <location>
        <position position="141"/>
    </location>
    <ligand>
        <name>3',3'-cUAMP</name>
        <dbReference type="ChEBI" id="CHEBI:143809"/>
    </ligand>
</feature>
<feature type="binding site" evidence="1">
    <location>
        <position position="147"/>
    </location>
    <ligand>
        <name>3',3'-cGAMP</name>
        <dbReference type="ChEBI" id="CHEBI:71501"/>
    </ligand>
</feature>
<feature type="binding site" evidence="1">
    <location>
        <position position="147"/>
    </location>
    <ligand>
        <name>3',3'-cUAMP</name>
        <dbReference type="ChEBI" id="CHEBI:143809"/>
    </ligand>
</feature>
<feature type="mutagenesis site" description="Complete loss of catalytic activity; when associated with A-113." evidence="2">
    <original>H</original>
    <variation>A</variation>
    <location>
        <position position="44"/>
    </location>
</feature>
<feature type="mutagenesis site" description="Complete loss of catalytic activity; when associated with A-44." evidence="2">
    <original>H</original>
    <variation>A</variation>
    <location>
        <position position="113"/>
    </location>
</feature>
<feature type="mutagenesis site" description="Partial loss of cleavage of 3'3'-cGAMP." evidence="2">
    <original>E</original>
    <variation>A</variation>
    <location>
        <position position="141"/>
    </location>
</feature>
<keyword id="KW-0378">Hydrolase</keyword>
<keyword id="KW-1185">Reference proteome</keyword>
<organism>
    <name type="scientific">Enterobacteria phage T4</name>
    <name type="common">Bacteriophage T4</name>
    <dbReference type="NCBI Taxonomy" id="10665"/>
    <lineage>
        <taxon>Viruses</taxon>
        <taxon>Duplodnaviria</taxon>
        <taxon>Heunggongvirae</taxon>
        <taxon>Uroviricota</taxon>
        <taxon>Caudoviricetes</taxon>
        <taxon>Straboviridae</taxon>
        <taxon>Tevenvirinae</taxon>
        <taxon>Tequatrovirus</taxon>
    </lineage>
</organism>
<sequence length="152" mass="17245">MMEFKDFSTGLYVAAKFSELTLDALEELQRSLRVPNPVPREKIHSTICYSRVNVPYVPSSGSFEVASSGHLEVWKTQDGSTLVLVLDSEYLRCRHMYARALGATHDFDDYTPHITLSYNVGPLSFSGDVQIPVVLDREYKEPLKLDWADDLK</sequence>
<comment type="function">
    <text evidence="2">Counteracts the host CBASS antiviral system. Phosphodiesterase that enables metal-independent hydrolysis of the host cyclic di- and trinucleotide CBASS signals such as 3'3'-cGAMP, 3'3'cUA, and 3'3'3'-cAAA (PubMed:35395152). Does not cleave cGG or cA4 (PubMed:35395152). Besides evasion of the CBASS system, might also enable evasion of the type III CRISPR systems that use cA3 signals (PubMed:35395152).</text>
</comment>
<comment type="catalytic activity">
    <reaction evidence="2">
        <text>3',3'-cUAMP + H2O = U[3'-5']pAp[3'] + H(+)</text>
        <dbReference type="Rhea" id="RHEA:72835"/>
        <dbReference type="ChEBI" id="CHEBI:15377"/>
        <dbReference type="ChEBI" id="CHEBI:15378"/>
        <dbReference type="ChEBI" id="CHEBI:143809"/>
        <dbReference type="ChEBI" id="CHEBI:192498"/>
    </reaction>
    <physiologicalReaction direction="left-to-right" evidence="2">
        <dbReference type="Rhea" id="RHEA:72836"/>
    </physiologicalReaction>
</comment>
<comment type="catalytic activity">
    <reaction evidence="2">
        <text>3',3',3'-c-tri-AMP + H2O = A[3'-5']pA[3'-5']pAp[3'] + H(+)</text>
        <dbReference type="Rhea" id="RHEA:72859"/>
        <dbReference type="ChEBI" id="CHEBI:15377"/>
        <dbReference type="ChEBI" id="CHEBI:15378"/>
        <dbReference type="ChEBI" id="CHEBI:192523"/>
        <dbReference type="ChEBI" id="CHEBI:192530"/>
    </reaction>
    <physiologicalReaction direction="left-to-right" evidence="2">
        <dbReference type="Rhea" id="RHEA:72860"/>
    </physiologicalReaction>
</comment>
<comment type="catalytic activity">
    <reaction evidence="2">
        <text>3',3',3'-cAAG + H2O = G[3'-5']pA[3'-5']pAp[3'] + H(+)</text>
        <dbReference type="Rhea" id="RHEA:72863"/>
        <dbReference type="ChEBI" id="CHEBI:15377"/>
        <dbReference type="ChEBI" id="CHEBI:15378"/>
        <dbReference type="ChEBI" id="CHEBI:143810"/>
        <dbReference type="ChEBI" id="CHEBI:192532"/>
    </reaction>
    <physiologicalReaction direction="left-to-right" evidence="2">
        <dbReference type="Rhea" id="RHEA:72864"/>
    </physiologicalReaction>
</comment>
<comment type="catalytic activity">
    <reaction evidence="2">
        <text>3',3',3'-cAAG + H2O = A[3'-5']pG[3'-5']pAp[3'] + H(+)</text>
        <dbReference type="Rhea" id="RHEA:72867"/>
        <dbReference type="ChEBI" id="CHEBI:15377"/>
        <dbReference type="ChEBI" id="CHEBI:15378"/>
        <dbReference type="ChEBI" id="CHEBI:143810"/>
        <dbReference type="ChEBI" id="CHEBI:192533"/>
    </reaction>
    <physiologicalReaction direction="left-to-right" evidence="2">
        <dbReference type="Rhea" id="RHEA:72868"/>
    </physiologicalReaction>
</comment>
<comment type="catalytic activity">
    <reaction evidence="2">
        <text>3',3'-cGAMP + H2O = G[3'-5']pAp[3'] + H(+)</text>
        <dbReference type="Rhea" id="RHEA:72831"/>
        <dbReference type="ChEBI" id="CHEBI:15377"/>
        <dbReference type="ChEBI" id="CHEBI:15378"/>
        <dbReference type="ChEBI" id="CHEBI:71501"/>
        <dbReference type="ChEBI" id="CHEBI:192497"/>
    </reaction>
    <physiologicalReaction direction="left-to-right" evidence="2">
        <dbReference type="Rhea" id="RHEA:72832"/>
    </physiologicalReaction>
</comment>
<comment type="similarity">
    <text evidence="4">Belongs to the anti-CBASS protein Acb1 family.</text>
</comment>
<comment type="sequence caution" evidence="4">
    <conflict type="erroneous initiation">
        <sequence resource="EMBL-CDS" id="CAA26802"/>
    </conflict>
    <text>Truncated N-terminus.</text>
</comment>
<evidence type="ECO:0000250" key="1">
    <source>
        <dbReference type="UniProtKB" id="A0A868BQY3"/>
    </source>
</evidence>
<evidence type="ECO:0000269" key="2">
    <source>
    </source>
</evidence>
<evidence type="ECO:0000303" key="3">
    <source>
    </source>
</evidence>
<evidence type="ECO:0000305" key="4"/>
<reference key="1">
    <citation type="journal article" date="1985" name="J. Mol. Biol.">
        <title>Sequence organization and control of transcription in the bacteriophage T4 tRNA region.</title>
        <authorList>
            <person name="Broida J."/>
            <person name="Abelson J."/>
        </authorList>
    </citation>
    <scope>NUCLEOTIDE SEQUENCE [GENOMIC DNA]</scope>
</reference>
<reference key="2">
    <citation type="journal article" date="2003" name="Microbiol. Mol. Biol. Rev.">
        <title>Bacteriophage T4 genome.</title>
        <authorList>
            <person name="Miller E.S."/>
            <person name="Kutter E."/>
            <person name="Mosig G."/>
            <person name="Arisaka F."/>
            <person name="Kunisawa T."/>
            <person name="Ruger W."/>
        </authorList>
    </citation>
    <scope>NUCLEOTIDE SEQUENCE [LARGE SCALE GENOMIC DNA]</scope>
</reference>
<reference key="3">
    <citation type="journal article" date="2022" name="Nature">
        <title>Phage anti-CBASS and anti-Pycsar nucleases subvert bacterial immunity.</title>
        <authorList>
            <person name="Hobbs S.J."/>
            <person name="Wein T."/>
            <person name="Lu A."/>
            <person name="Morehouse B.R."/>
            <person name="Schnabel J."/>
            <person name="Leavitt A."/>
            <person name="Yirmiya E."/>
            <person name="Sorek R."/>
            <person name="Kranzusch P.J."/>
        </authorList>
    </citation>
    <scope>FUNCTION</scope>
    <scope>MUTAGENESIS OF HIS-44; HIS-113 AND GLU-141</scope>
    <scope>CATALYTIC ACTIVITY</scope>
</reference>